<dbReference type="EMBL" id="AM942759">
    <property type="protein sequence ID" value="CAR42220.1"/>
    <property type="molecule type" value="Genomic_DNA"/>
</dbReference>
<dbReference type="RefSeq" id="WP_004242572.1">
    <property type="nucleotide sequence ID" value="NC_010554.1"/>
</dbReference>
<dbReference type="SMR" id="B4ETI7"/>
<dbReference type="EnsemblBacteria" id="CAR42220">
    <property type="protein sequence ID" value="CAR42220"/>
    <property type="gene ID" value="PMI1015"/>
</dbReference>
<dbReference type="GeneID" id="6801025"/>
<dbReference type="KEGG" id="pmr:PMI1015"/>
<dbReference type="eggNOG" id="COG3109">
    <property type="taxonomic scope" value="Bacteria"/>
</dbReference>
<dbReference type="HOGENOM" id="CLU_113254_0_0_6"/>
<dbReference type="Proteomes" id="UP000008319">
    <property type="component" value="Chromosome"/>
</dbReference>
<dbReference type="GO" id="GO:0005829">
    <property type="term" value="C:cytosol"/>
    <property type="evidence" value="ECO:0007669"/>
    <property type="project" value="TreeGrafter"/>
</dbReference>
<dbReference type="GO" id="GO:0033592">
    <property type="term" value="F:RNA strand annealing activity"/>
    <property type="evidence" value="ECO:0007669"/>
    <property type="project" value="UniProtKB-UniRule"/>
</dbReference>
<dbReference type="GO" id="GO:0034057">
    <property type="term" value="F:RNA strand-exchange activity"/>
    <property type="evidence" value="ECO:0007669"/>
    <property type="project" value="UniProtKB-UniRule"/>
</dbReference>
<dbReference type="GO" id="GO:0010608">
    <property type="term" value="P:post-transcriptional regulation of gene expression"/>
    <property type="evidence" value="ECO:0007669"/>
    <property type="project" value="InterPro"/>
</dbReference>
<dbReference type="FunFam" id="1.10.1710.10:FF:000001">
    <property type="entry name" value="RNA chaperone ProQ"/>
    <property type="match status" value="1"/>
</dbReference>
<dbReference type="Gene3D" id="1.10.1710.10">
    <property type="entry name" value="ProQ/FinO domain"/>
    <property type="match status" value="1"/>
</dbReference>
<dbReference type="HAMAP" id="MF_00749">
    <property type="entry name" value="ProQ"/>
    <property type="match status" value="1"/>
</dbReference>
<dbReference type="InterPro" id="IPR023529">
    <property type="entry name" value="ProQ"/>
</dbReference>
<dbReference type="InterPro" id="IPR016103">
    <property type="entry name" value="ProQ/FinO"/>
</dbReference>
<dbReference type="InterPro" id="IPR036442">
    <property type="entry name" value="ProQ/FinO_sf"/>
</dbReference>
<dbReference type="InterPro" id="IPR035236">
    <property type="entry name" value="ProQ_C"/>
</dbReference>
<dbReference type="NCBIfam" id="NF003434">
    <property type="entry name" value="PRK04950.1"/>
    <property type="match status" value="1"/>
</dbReference>
<dbReference type="PANTHER" id="PTHR38106">
    <property type="entry name" value="RNA CHAPERONE PROQ"/>
    <property type="match status" value="1"/>
</dbReference>
<dbReference type="PANTHER" id="PTHR38106:SF1">
    <property type="entry name" value="RNA CHAPERONE PROQ"/>
    <property type="match status" value="1"/>
</dbReference>
<dbReference type="Pfam" id="PF04352">
    <property type="entry name" value="ProQ"/>
    <property type="match status" value="1"/>
</dbReference>
<dbReference type="Pfam" id="PF17516">
    <property type="entry name" value="ProQ_C"/>
    <property type="match status" value="1"/>
</dbReference>
<dbReference type="SMART" id="SM00945">
    <property type="entry name" value="ProQ"/>
    <property type="match status" value="1"/>
</dbReference>
<dbReference type="SUPFAM" id="SSF48657">
    <property type="entry name" value="FinO-like"/>
    <property type="match status" value="1"/>
</dbReference>
<keyword id="KW-0143">Chaperone</keyword>
<keyword id="KW-0963">Cytoplasm</keyword>
<keyword id="KW-1185">Reference proteome</keyword>
<keyword id="KW-0694">RNA-binding</keyword>
<evidence type="ECO:0000255" key="1">
    <source>
        <dbReference type="HAMAP-Rule" id="MF_00749"/>
    </source>
</evidence>
<evidence type="ECO:0000256" key="2">
    <source>
        <dbReference type="SAM" id="MobiDB-lite"/>
    </source>
</evidence>
<organism>
    <name type="scientific">Proteus mirabilis (strain HI4320)</name>
    <dbReference type="NCBI Taxonomy" id="529507"/>
    <lineage>
        <taxon>Bacteria</taxon>
        <taxon>Pseudomonadati</taxon>
        <taxon>Pseudomonadota</taxon>
        <taxon>Gammaproteobacteria</taxon>
        <taxon>Enterobacterales</taxon>
        <taxon>Morganellaceae</taxon>
        <taxon>Proteus</taxon>
    </lineage>
</organism>
<accession>B4ETI7</accession>
<feature type="chain" id="PRO_1000133300" description="RNA chaperone ProQ">
    <location>
        <begin position="1"/>
        <end position="230"/>
    </location>
</feature>
<feature type="region of interest" description="Disordered" evidence="2">
    <location>
        <begin position="104"/>
        <end position="176"/>
    </location>
</feature>
<feature type="compositionally biased region" description="Basic and acidic residues" evidence="2">
    <location>
        <begin position="115"/>
        <end position="132"/>
    </location>
</feature>
<sequence length="230" mass="25837">MENQPKLNSSKEIIAFLAERFPKCFIAEGEARPLKVGIFQDLVEHLKDETQLSKTQLRSALRLYTSSWRYLYGVKEGAKRVDLNGNDCGELEAEHIAHARTQLAEAKARVQAQRAEQRAKKREAEGDKETSKRPAAKKPNPRRQAPKDGEKRQPRPQKQANQAPRKAPRQNTEKLTPVKDISVLTVGQSLKVNVGSSVMDATVLEIAKEGVRVQLPNGLAMNVRTEHLKF</sequence>
<name>PROQ_PROMH</name>
<proteinExistence type="inferred from homology"/>
<protein>
    <recommendedName>
        <fullName evidence="1">RNA chaperone ProQ</fullName>
    </recommendedName>
</protein>
<comment type="function">
    <text evidence="1">RNA chaperone with significant RNA binding, RNA strand exchange and RNA duplexing activities. May regulate ProP activity through an RNA-based, post-transcriptional mechanism.</text>
</comment>
<comment type="subcellular location">
    <subcellularLocation>
        <location evidence="1">Cytoplasm</location>
    </subcellularLocation>
</comment>
<comment type="similarity">
    <text evidence="1">Belongs to the ProQ family.</text>
</comment>
<gene>
    <name evidence="1" type="primary">proQ</name>
    <name type="ordered locus">PMI1015</name>
</gene>
<reference key="1">
    <citation type="journal article" date="2008" name="J. Bacteriol.">
        <title>Complete genome sequence of uropathogenic Proteus mirabilis, a master of both adherence and motility.</title>
        <authorList>
            <person name="Pearson M.M."/>
            <person name="Sebaihia M."/>
            <person name="Churcher C."/>
            <person name="Quail M.A."/>
            <person name="Seshasayee A.S."/>
            <person name="Luscombe N.M."/>
            <person name="Abdellah Z."/>
            <person name="Arrosmith C."/>
            <person name="Atkin B."/>
            <person name="Chillingworth T."/>
            <person name="Hauser H."/>
            <person name="Jagels K."/>
            <person name="Moule S."/>
            <person name="Mungall K."/>
            <person name="Norbertczak H."/>
            <person name="Rabbinowitsch E."/>
            <person name="Walker D."/>
            <person name="Whithead S."/>
            <person name="Thomson N.R."/>
            <person name="Rather P.N."/>
            <person name="Parkhill J."/>
            <person name="Mobley H.L.T."/>
        </authorList>
    </citation>
    <scope>NUCLEOTIDE SEQUENCE [LARGE SCALE GENOMIC DNA]</scope>
    <source>
        <strain>HI4320</strain>
    </source>
</reference>